<keyword id="KW-0687">Ribonucleoprotein</keyword>
<keyword id="KW-0689">Ribosomal protein</keyword>
<keyword id="KW-0694">RNA-binding</keyword>
<keyword id="KW-0699">rRNA-binding</keyword>
<proteinExistence type="inferred from homology"/>
<accession>B7V1F3</accession>
<reference key="1">
    <citation type="journal article" date="2009" name="Genome Res.">
        <title>Newly introduced genomic prophage islands are critical determinants of in vivo competitiveness in the Liverpool epidemic strain of Pseudomonas aeruginosa.</title>
        <authorList>
            <person name="Winstanley C."/>
            <person name="Langille M.G.I."/>
            <person name="Fothergill J.L."/>
            <person name="Kukavica-Ibrulj I."/>
            <person name="Paradis-Bleau C."/>
            <person name="Sanschagrin F."/>
            <person name="Thomson N.R."/>
            <person name="Winsor G.L."/>
            <person name="Quail M.A."/>
            <person name="Lennard N."/>
            <person name="Bignell A."/>
            <person name="Clarke L."/>
            <person name="Seeger K."/>
            <person name="Saunders D."/>
            <person name="Harris D."/>
            <person name="Parkhill J."/>
            <person name="Hancock R.E.W."/>
            <person name="Brinkman F.S.L."/>
            <person name="Levesque R.C."/>
        </authorList>
    </citation>
    <scope>NUCLEOTIDE SEQUENCE [LARGE SCALE GENOMIC DNA]</scope>
    <source>
        <strain>LESB58</strain>
    </source>
</reference>
<evidence type="ECO:0000255" key="1">
    <source>
        <dbReference type="HAMAP-Rule" id="MF_01343"/>
    </source>
</evidence>
<evidence type="ECO:0000305" key="2"/>
<organism>
    <name type="scientific">Pseudomonas aeruginosa (strain LESB58)</name>
    <dbReference type="NCBI Taxonomy" id="557722"/>
    <lineage>
        <taxon>Bacteria</taxon>
        <taxon>Pseudomonadati</taxon>
        <taxon>Pseudomonadota</taxon>
        <taxon>Gammaproteobacteria</taxon>
        <taxon>Pseudomonadales</taxon>
        <taxon>Pseudomonadaceae</taxon>
        <taxon>Pseudomonas</taxon>
    </lineage>
</organism>
<feature type="chain" id="PRO_1000143155" description="Small ribosomal subunit protein uS15">
    <location>
        <begin position="1"/>
        <end position="89"/>
    </location>
</feature>
<name>RS15_PSEA8</name>
<dbReference type="EMBL" id="FM209186">
    <property type="protein sequence ID" value="CAW29880.1"/>
    <property type="molecule type" value="Genomic_DNA"/>
</dbReference>
<dbReference type="RefSeq" id="WP_003095184.1">
    <property type="nucleotide sequence ID" value="NC_011770.1"/>
</dbReference>
<dbReference type="SMR" id="B7V1F3"/>
<dbReference type="GeneID" id="77223276"/>
<dbReference type="KEGG" id="pag:PLES_51261"/>
<dbReference type="HOGENOM" id="CLU_148518_0_0_6"/>
<dbReference type="GO" id="GO:0022627">
    <property type="term" value="C:cytosolic small ribosomal subunit"/>
    <property type="evidence" value="ECO:0007669"/>
    <property type="project" value="TreeGrafter"/>
</dbReference>
<dbReference type="GO" id="GO:0019843">
    <property type="term" value="F:rRNA binding"/>
    <property type="evidence" value="ECO:0007669"/>
    <property type="project" value="UniProtKB-UniRule"/>
</dbReference>
<dbReference type="GO" id="GO:0003735">
    <property type="term" value="F:structural constituent of ribosome"/>
    <property type="evidence" value="ECO:0007669"/>
    <property type="project" value="InterPro"/>
</dbReference>
<dbReference type="GO" id="GO:0006412">
    <property type="term" value="P:translation"/>
    <property type="evidence" value="ECO:0007669"/>
    <property type="project" value="UniProtKB-UniRule"/>
</dbReference>
<dbReference type="CDD" id="cd00353">
    <property type="entry name" value="Ribosomal_S15p_S13e"/>
    <property type="match status" value="1"/>
</dbReference>
<dbReference type="FunFam" id="1.10.287.10:FF:000002">
    <property type="entry name" value="30S ribosomal protein S15"/>
    <property type="match status" value="1"/>
</dbReference>
<dbReference type="Gene3D" id="6.10.250.3130">
    <property type="match status" value="1"/>
</dbReference>
<dbReference type="Gene3D" id="1.10.287.10">
    <property type="entry name" value="S15/NS1, RNA-binding"/>
    <property type="match status" value="1"/>
</dbReference>
<dbReference type="HAMAP" id="MF_01343_B">
    <property type="entry name" value="Ribosomal_uS15_B"/>
    <property type="match status" value="1"/>
</dbReference>
<dbReference type="InterPro" id="IPR000589">
    <property type="entry name" value="Ribosomal_uS15"/>
</dbReference>
<dbReference type="InterPro" id="IPR005290">
    <property type="entry name" value="Ribosomal_uS15_bac-type"/>
</dbReference>
<dbReference type="InterPro" id="IPR009068">
    <property type="entry name" value="uS15_NS1_RNA-bd_sf"/>
</dbReference>
<dbReference type="NCBIfam" id="TIGR00952">
    <property type="entry name" value="S15_bact"/>
    <property type="match status" value="1"/>
</dbReference>
<dbReference type="PANTHER" id="PTHR23321">
    <property type="entry name" value="RIBOSOMAL PROTEIN S15, BACTERIAL AND ORGANELLAR"/>
    <property type="match status" value="1"/>
</dbReference>
<dbReference type="PANTHER" id="PTHR23321:SF26">
    <property type="entry name" value="SMALL RIBOSOMAL SUBUNIT PROTEIN US15M"/>
    <property type="match status" value="1"/>
</dbReference>
<dbReference type="Pfam" id="PF00312">
    <property type="entry name" value="Ribosomal_S15"/>
    <property type="match status" value="1"/>
</dbReference>
<dbReference type="SMART" id="SM01387">
    <property type="entry name" value="Ribosomal_S15"/>
    <property type="match status" value="1"/>
</dbReference>
<dbReference type="SUPFAM" id="SSF47060">
    <property type="entry name" value="S15/NS1 RNA-binding domain"/>
    <property type="match status" value="1"/>
</dbReference>
<dbReference type="PROSITE" id="PS00362">
    <property type="entry name" value="RIBOSOMAL_S15"/>
    <property type="match status" value="1"/>
</dbReference>
<sequence length="89" mass="10116">MALSVEEKAQIVNEYKQAEGDTGSPEVQVALLSANINKLQDHFKANGKDHHSRRGLIRMVNQRRKLLDYLKGKDVSRYTALIGRLGLRR</sequence>
<comment type="function">
    <text evidence="1">One of the primary rRNA binding proteins, it binds directly to 16S rRNA where it helps nucleate assembly of the platform of the 30S subunit by binding and bridging several RNA helices of the 16S rRNA.</text>
</comment>
<comment type="function">
    <text evidence="1">Forms an intersubunit bridge (bridge B4) with the 23S rRNA of the 50S subunit in the ribosome.</text>
</comment>
<comment type="subunit">
    <text evidence="1">Part of the 30S ribosomal subunit. Forms a bridge to the 50S subunit in the 70S ribosome, contacting the 23S rRNA.</text>
</comment>
<comment type="similarity">
    <text evidence="1">Belongs to the universal ribosomal protein uS15 family.</text>
</comment>
<gene>
    <name evidence="1" type="primary">rpsO</name>
    <name type="ordered locus">PLES_51261</name>
</gene>
<protein>
    <recommendedName>
        <fullName evidence="1">Small ribosomal subunit protein uS15</fullName>
    </recommendedName>
    <alternativeName>
        <fullName evidence="2">30S ribosomal protein S15</fullName>
    </alternativeName>
</protein>